<organism>
    <name type="scientific">Shewanella sp. (strain MR-4)</name>
    <dbReference type="NCBI Taxonomy" id="60480"/>
    <lineage>
        <taxon>Bacteria</taxon>
        <taxon>Pseudomonadati</taxon>
        <taxon>Pseudomonadota</taxon>
        <taxon>Gammaproteobacteria</taxon>
        <taxon>Alteromonadales</taxon>
        <taxon>Shewanellaceae</taxon>
        <taxon>Shewanella</taxon>
    </lineage>
</organism>
<sequence>MTRVALTSAVNLAKKLQEAGIRHPAVLKAISHTPRELFLDNALAHKAYENTALPIGQGQTISQPYIVARMTELLLQHQPQKVLEVGTGSGYQAAILAQLVPELCTIERIKGLQIQARQRLKRLDLHNVSFKYGDGWQGWPNRSPFDGIMVTAAAAKVPEALLSQLAEGGVLIIPVGEETQQLMRFTRRSDRFSSEVIETVKFVPLVNGELA</sequence>
<keyword id="KW-0963">Cytoplasm</keyword>
<keyword id="KW-0489">Methyltransferase</keyword>
<keyword id="KW-0949">S-adenosyl-L-methionine</keyword>
<keyword id="KW-0808">Transferase</keyword>
<reference key="1">
    <citation type="submission" date="2006-08" db="EMBL/GenBank/DDBJ databases">
        <title>Complete sequence of Shewanella sp. MR-4.</title>
        <authorList>
            <consortium name="US DOE Joint Genome Institute"/>
            <person name="Copeland A."/>
            <person name="Lucas S."/>
            <person name="Lapidus A."/>
            <person name="Barry K."/>
            <person name="Detter J.C."/>
            <person name="Glavina del Rio T."/>
            <person name="Hammon N."/>
            <person name="Israni S."/>
            <person name="Dalin E."/>
            <person name="Tice H."/>
            <person name="Pitluck S."/>
            <person name="Kiss H."/>
            <person name="Brettin T."/>
            <person name="Bruce D."/>
            <person name="Han C."/>
            <person name="Tapia R."/>
            <person name="Gilna P."/>
            <person name="Schmutz J."/>
            <person name="Larimer F."/>
            <person name="Land M."/>
            <person name="Hauser L."/>
            <person name="Kyrpides N."/>
            <person name="Mikhailova N."/>
            <person name="Nealson K."/>
            <person name="Konstantinidis K."/>
            <person name="Klappenbach J."/>
            <person name="Tiedje J."/>
            <person name="Richardson P."/>
        </authorList>
    </citation>
    <scope>NUCLEOTIDE SEQUENCE [LARGE SCALE GENOMIC DNA]</scope>
    <source>
        <strain>MR-4</strain>
    </source>
</reference>
<proteinExistence type="inferred from homology"/>
<accession>Q0HL66</accession>
<gene>
    <name evidence="1" type="primary">pcm</name>
    <name type="ordered locus">Shewmr4_1121</name>
</gene>
<dbReference type="EC" id="2.1.1.77" evidence="1"/>
<dbReference type="EMBL" id="CP000446">
    <property type="protein sequence ID" value="ABI38201.1"/>
    <property type="molecule type" value="Genomic_DNA"/>
</dbReference>
<dbReference type="RefSeq" id="WP_011621910.1">
    <property type="nucleotide sequence ID" value="NC_008321.1"/>
</dbReference>
<dbReference type="SMR" id="Q0HL66"/>
<dbReference type="KEGG" id="she:Shewmr4_1121"/>
<dbReference type="HOGENOM" id="CLU_055432_2_0_6"/>
<dbReference type="GO" id="GO:0005737">
    <property type="term" value="C:cytoplasm"/>
    <property type="evidence" value="ECO:0007669"/>
    <property type="project" value="UniProtKB-SubCell"/>
</dbReference>
<dbReference type="GO" id="GO:0004719">
    <property type="term" value="F:protein-L-isoaspartate (D-aspartate) O-methyltransferase activity"/>
    <property type="evidence" value="ECO:0007669"/>
    <property type="project" value="UniProtKB-UniRule"/>
</dbReference>
<dbReference type="GO" id="GO:0032259">
    <property type="term" value="P:methylation"/>
    <property type="evidence" value="ECO:0007669"/>
    <property type="project" value="UniProtKB-KW"/>
</dbReference>
<dbReference type="GO" id="GO:0036211">
    <property type="term" value="P:protein modification process"/>
    <property type="evidence" value="ECO:0007669"/>
    <property type="project" value="UniProtKB-UniRule"/>
</dbReference>
<dbReference type="GO" id="GO:0030091">
    <property type="term" value="P:protein repair"/>
    <property type="evidence" value="ECO:0007669"/>
    <property type="project" value="UniProtKB-UniRule"/>
</dbReference>
<dbReference type="CDD" id="cd02440">
    <property type="entry name" value="AdoMet_MTases"/>
    <property type="match status" value="1"/>
</dbReference>
<dbReference type="FunFam" id="3.40.50.150:FF:000010">
    <property type="entry name" value="Protein-L-isoaspartate O-methyltransferase"/>
    <property type="match status" value="1"/>
</dbReference>
<dbReference type="Gene3D" id="3.40.50.150">
    <property type="entry name" value="Vaccinia Virus protein VP39"/>
    <property type="match status" value="1"/>
</dbReference>
<dbReference type="HAMAP" id="MF_00090">
    <property type="entry name" value="PIMT"/>
    <property type="match status" value="1"/>
</dbReference>
<dbReference type="InterPro" id="IPR000682">
    <property type="entry name" value="PCMT"/>
</dbReference>
<dbReference type="InterPro" id="IPR029063">
    <property type="entry name" value="SAM-dependent_MTases_sf"/>
</dbReference>
<dbReference type="NCBIfam" id="TIGR00080">
    <property type="entry name" value="pimt"/>
    <property type="match status" value="1"/>
</dbReference>
<dbReference type="NCBIfam" id="NF001453">
    <property type="entry name" value="PRK00312.1"/>
    <property type="match status" value="1"/>
</dbReference>
<dbReference type="PANTHER" id="PTHR11579">
    <property type="entry name" value="PROTEIN-L-ISOASPARTATE O-METHYLTRANSFERASE"/>
    <property type="match status" value="1"/>
</dbReference>
<dbReference type="PANTHER" id="PTHR11579:SF0">
    <property type="entry name" value="PROTEIN-L-ISOASPARTATE(D-ASPARTATE) O-METHYLTRANSFERASE"/>
    <property type="match status" value="1"/>
</dbReference>
<dbReference type="Pfam" id="PF01135">
    <property type="entry name" value="PCMT"/>
    <property type="match status" value="1"/>
</dbReference>
<dbReference type="SUPFAM" id="SSF53335">
    <property type="entry name" value="S-adenosyl-L-methionine-dependent methyltransferases"/>
    <property type="match status" value="1"/>
</dbReference>
<dbReference type="PROSITE" id="PS01279">
    <property type="entry name" value="PCMT"/>
    <property type="match status" value="1"/>
</dbReference>
<protein>
    <recommendedName>
        <fullName evidence="1">Protein-L-isoaspartate O-methyltransferase</fullName>
        <ecNumber evidence="1">2.1.1.77</ecNumber>
    </recommendedName>
    <alternativeName>
        <fullName evidence="1">L-isoaspartyl protein carboxyl methyltransferase</fullName>
    </alternativeName>
    <alternativeName>
        <fullName evidence="1">Protein L-isoaspartyl methyltransferase</fullName>
    </alternativeName>
    <alternativeName>
        <fullName evidence="1">Protein-beta-aspartate methyltransferase</fullName>
        <shortName evidence="1">PIMT</shortName>
    </alternativeName>
</protein>
<name>PIMT_SHESM</name>
<feature type="chain" id="PRO_1000093290" description="Protein-L-isoaspartate O-methyltransferase">
    <location>
        <begin position="1"/>
        <end position="211"/>
    </location>
</feature>
<feature type="active site" evidence="1">
    <location>
        <position position="62"/>
    </location>
</feature>
<comment type="function">
    <text evidence="1">Catalyzes the methyl esterification of L-isoaspartyl residues in peptides and proteins that result from spontaneous decomposition of normal L-aspartyl and L-asparaginyl residues. It plays a role in the repair and/or degradation of damaged proteins.</text>
</comment>
<comment type="catalytic activity">
    <reaction evidence="1">
        <text>[protein]-L-isoaspartate + S-adenosyl-L-methionine = [protein]-L-isoaspartate alpha-methyl ester + S-adenosyl-L-homocysteine</text>
        <dbReference type="Rhea" id="RHEA:12705"/>
        <dbReference type="Rhea" id="RHEA-COMP:12143"/>
        <dbReference type="Rhea" id="RHEA-COMP:12144"/>
        <dbReference type="ChEBI" id="CHEBI:57856"/>
        <dbReference type="ChEBI" id="CHEBI:59789"/>
        <dbReference type="ChEBI" id="CHEBI:90596"/>
        <dbReference type="ChEBI" id="CHEBI:90598"/>
        <dbReference type="EC" id="2.1.1.77"/>
    </reaction>
</comment>
<comment type="subcellular location">
    <subcellularLocation>
        <location evidence="1">Cytoplasm</location>
    </subcellularLocation>
</comment>
<comment type="similarity">
    <text evidence="1">Belongs to the methyltransferase superfamily. L-isoaspartyl/D-aspartyl protein methyltransferase family.</text>
</comment>
<evidence type="ECO:0000255" key="1">
    <source>
        <dbReference type="HAMAP-Rule" id="MF_00090"/>
    </source>
</evidence>